<dbReference type="EMBL" id="EU827805">
    <property type="protein sequence ID" value="ACF08005.1"/>
    <property type="molecule type" value="mRNA"/>
</dbReference>
<dbReference type="GO" id="GO:0005576">
    <property type="term" value="C:extracellular region"/>
    <property type="evidence" value="ECO:0000250"/>
    <property type="project" value="UniProtKB"/>
</dbReference>
<dbReference type="GO" id="GO:0050830">
    <property type="term" value="P:defense response to Gram-positive bacterium"/>
    <property type="evidence" value="ECO:0000250"/>
    <property type="project" value="UniProtKB"/>
</dbReference>
<dbReference type="InterPro" id="IPR004275">
    <property type="entry name" value="Frog_antimicrobial_propeptide"/>
</dbReference>
<dbReference type="Pfam" id="PF03032">
    <property type="entry name" value="FSAP_sig_propep"/>
    <property type="match status" value="1"/>
</dbReference>
<proteinExistence type="evidence at transcript level"/>
<keyword id="KW-0878">Amphibian defense peptide</keyword>
<keyword id="KW-0044">Antibiotic</keyword>
<keyword id="KW-0929">Antimicrobial</keyword>
<keyword id="KW-0165">Cleavage on pair of basic residues</keyword>
<keyword id="KW-0964">Secreted</keyword>
<keyword id="KW-0732">Signal</keyword>
<organism>
    <name type="scientific">Rana dybowskii</name>
    <name type="common">Dybovsky's frog</name>
    <name type="synonym">Korean brown frog</name>
    <dbReference type="NCBI Taxonomy" id="71582"/>
    <lineage>
        <taxon>Eukaryota</taxon>
        <taxon>Metazoa</taxon>
        <taxon>Chordata</taxon>
        <taxon>Craniata</taxon>
        <taxon>Vertebrata</taxon>
        <taxon>Euteleostomi</taxon>
        <taxon>Amphibia</taxon>
        <taxon>Batrachia</taxon>
        <taxon>Anura</taxon>
        <taxon>Neobatrachia</taxon>
        <taxon>Ranoidea</taxon>
        <taxon>Ranidae</taxon>
        <taxon>Rana</taxon>
        <taxon>Rana</taxon>
    </lineage>
</organism>
<protein>
    <recommendedName>
        <fullName evidence="4 6">Temporin-CDYd</fullName>
    </recommendedName>
</protein>
<accession>B3VZU5</accession>
<reference evidence="5 6" key="1">
    <citation type="journal article" date="2009" name="Comp. Biochem. Physiol.">
        <title>Characterization of antimicrobial peptides isolated from the skin of the Chinese frog, Rana dybowskii.</title>
        <authorList>
            <person name="Jin L.-L."/>
            <person name="Li Q."/>
            <person name="Song S.-S."/>
            <person name="Feng K."/>
            <person name="Zhang D.-B."/>
            <person name="Wang Q.-Y."/>
            <person name="Chen Y.-H."/>
        </authorList>
    </citation>
    <scope>NUCLEOTIDE SEQUENCE [MRNA]</scope>
    <scope>TISSUE SPECIFICITY</scope>
    <source>
        <tissue evidence="6">Skin</tissue>
    </source>
</reference>
<sequence>MFTLKKSMLLLLFLGTISLTLCEEERDANEEEENGGEVKEEEKRFIGPLISALASLFKG</sequence>
<name>TPCD_RANDY</name>
<evidence type="ECO:0000250" key="1">
    <source>
        <dbReference type="UniProtKB" id="P79874"/>
    </source>
</evidence>
<evidence type="ECO:0000255" key="2"/>
<evidence type="ECO:0000269" key="3">
    <source>
    </source>
</evidence>
<evidence type="ECO:0000303" key="4">
    <source>
    </source>
</evidence>
<evidence type="ECO:0000305" key="5"/>
<evidence type="ECO:0000312" key="6">
    <source>
        <dbReference type="EMBL" id="ACF08005.1"/>
    </source>
</evidence>
<comment type="function">
    <text evidence="1">Antimicrobial peptide.</text>
</comment>
<comment type="subcellular location">
    <subcellularLocation>
        <location evidence="1">Secreted</location>
    </subcellularLocation>
</comment>
<comment type="tissue specificity">
    <text evidence="3">Expressed by the skin glands.</text>
</comment>
<comment type="similarity">
    <text evidence="2">Belongs to the frog skin active peptide (FSAP) family. Temporin subfamily.</text>
</comment>
<feature type="signal peptide" evidence="2 6">
    <location>
        <begin position="1"/>
        <end position="22"/>
    </location>
</feature>
<feature type="propeptide" id="PRO_0000391434" evidence="1">
    <location>
        <begin position="23"/>
        <end position="42"/>
    </location>
</feature>
<feature type="peptide" id="PRO_5000381485" description="Temporin-CDYd" evidence="3">
    <location>
        <begin position="45"/>
        <end position="59"/>
    </location>
</feature>